<keyword id="KW-0002">3D-structure</keyword>
<keyword id="KW-0025">Alternative splicing</keyword>
<keyword id="KW-0040">ANK repeat</keyword>
<keyword id="KW-0967">Endosome</keyword>
<keyword id="KW-0472">Membrane</keyword>
<keyword id="KW-0524">Neurogenesis</keyword>
<keyword id="KW-0597">Phosphoprotein</keyword>
<keyword id="KW-1185">Reference proteome</keyword>
<keyword id="KW-0677">Repeat</keyword>
<keyword id="KW-0812">Transmembrane</keyword>
<keyword id="KW-1133">Transmembrane helix</keyword>
<feature type="chain" id="PRO_0000322120" description="Kinase D-interacting substrate of 220 kDa">
    <location>
        <begin position="1"/>
        <end position="1762"/>
    </location>
</feature>
<feature type="topological domain" description="Cytoplasmic" evidence="11">
    <location>
        <begin position="1"/>
        <end position="508"/>
    </location>
</feature>
<feature type="transmembrane region" description="Helical" evidence="2">
    <location>
        <begin position="509"/>
        <end position="529"/>
    </location>
</feature>
<feature type="topological domain" description="Extracellular" evidence="11">
    <location>
        <begin position="530"/>
        <end position="533"/>
    </location>
</feature>
<feature type="transmembrane region" description="Helical" evidence="2">
    <location>
        <begin position="534"/>
        <end position="554"/>
    </location>
</feature>
<feature type="topological domain" description="Cytoplasmic" evidence="11">
    <location>
        <begin position="555"/>
        <end position="668"/>
    </location>
</feature>
<feature type="transmembrane region" description="Helical" evidence="2">
    <location>
        <begin position="669"/>
        <end position="689"/>
    </location>
</feature>
<feature type="topological domain" description="Extracellular" evidence="11">
    <location>
        <begin position="690"/>
        <end position="696"/>
    </location>
</feature>
<feature type="transmembrane region" description="Helical" evidence="2">
    <location>
        <begin position="697"/>
        <end position="717"/>
    </location>
</feature>
<feature type="topological domain" description="Cytoplasmic" evidence="11">
    <location>
        <begin position="718"/>
        <end position="1680"/>
    </location>
</feature>
<feature type="repeat" description="ANK 1" evidence="2">
    <location>
        <begin position="45"/>
        <end position="74"/>
    </location>
</feature>
<feature type="repeat" description="ANK 2" evidence="2">
    <location>
        <begin position="78"/>
        <end position="107"/>
    </location>
</feature>
<feature type="repeat" description="ANK 3" evidence="2">
    <location>
        <begin position="111"/>
        <end position="140"/>
    </location>
</feature>
<feature type="repeat" description="ANK 4" evidence="2">
    <location>
        <begin position="145"/>
        <end position="174"/>
    </location>
</feature>
<feature type="repeat" description="ANK 5" evidence="2">
    <location>
        <begin position="178"/>
        <end position="207"/>
    </location>
</feature>
<feature type="repeat" description="ANK 6" evidence="2">
    <location>
        <begin position="211"/>
        <end position="240"/>
    </location>
</feature>
<feature type="repeat" description="ANK 7" evidence="2">
    <location>
        <begin position="244"/>
        <end position="273"/>
    </location>
</feature>
<feature type="repeat" description="ANK 8" evidence="2">
    <location>
        <begin position="277"/>
        <end position="306"/>
    </location>
</feature>
<feature type="repeat" description="ANK 9" evidence="2">
    <location>
        <begin position="310"/>
        <end position="339"/>
    </location>
</feature>
<feature type="repeat" description="ANK 10" evidence="2">
    <location>
        <begin position="343"/>
        <end position="372"/>
    </location>
</feature>
<feature type="repeat" description="ANK 11" evidence="2">
    <location>
        <begin position="376"/>
        <end position="405"/>
    </location>
</feature>
<feature type="domain" description="KAP NTPase">
    <location>
        <begin position="440"/>
        <end position="953"/>
    </location>
</feature>
<feature type="region of interest" description="Mediates interaction with CRKL" evidence="6">
    <location>
        <begin position="1089"/>
        <end position="1092"/>
    </location>
</feature>
<feature type="region of interest" description="Disordered" evidence="3">
    <location>
        <begin position="1279"/>
        <end position="1305"/>
    </location>
</feature>
<feature type="region of interest" description="Disordered" evidence="3">
    <location>
        <begin position="1336"/>
        <end position="1358"/>
    </location>
</feature>
<feature type="region of interest" description="Disordered" evidence="3">
    <location>
        <begin position="1390"/>
        <end position="1440"/>
    </location>
</feature>
<feature type="region of interest" description="Disordered" evidence="3">
    <location>
        <begin position="1452"/>
        <end position="1556"/>
    </location>
</feature>
<feature type="region of interest" description="Disordered" evidence="3">
    <location>
        <begin position="1571"/>
        <end position="1628"/>
    </location>
</feature>
<feature type="region of interest" description="Disordered" evidence="3">
    <location>
        <begin position="1704"/>
        <end position="1762"/>
    </location>
</feature>
<feature type="short sequence motif" description="PDZ-binding" evidence="8">
    <location>
        <begin position="1757"/>
        <end position="1762"/>
    </location>
</feature>
<feature type="compositionally biased region" description="Polar residues" evidence="3">
    <location>
        <begin position="1338"/>
        <end position="1350"/>
    </location>
</feature>
<feature type="compositionally biased region" description="Low complexity" evidence="3">
    <location>
        <begin position="1395"/>
        <end position="1422"/>
    </location>
</feature>
<feature type="compositionally biased region" description="Basic and acidic residues" evidence="3">
    <location>
        <begin position="1423"/>
        <end position="1440"/>
    </location>
</feature>
<feature type="compositionally biased region" description="Polar residues" evidence="3">
    <location>
        <begin position="1452"/>
        <end position="1462"/>
    </location>
</feature>
<feature type="compositionally biased region" description="Acidic residues" evidence="3">
    <location>
        <begin position="1514"/>
        <end position="1524"/>
    </location>
</feature>
<feature type="compositionally biased region" description="Basic and acidic residues" evidence="3">
    <location>
        <begin position="1529"/>
        <end position="1553"/>
    </location>
</feature>
<feature type="compositionally biased region" description="Polar residues" evidence="3">
    <location>
        <begin position="1579"/>
        <end position="1590"/>
    </location>
</feature>
<feature type="modified residue" description="Phosphoserine" evidence="1">
    <location>
        <position position="882"/>
    </location>
</feature>
<feature type="modified residue" description="Phosphoserine" evidence="1">
    <location>
        <position position="885"/>
    </location>
</feature>
<feature type="modified residue" description="Phosphothreonine" evidence="1">
    <location>
        <position position="914"/>
    </location>
</feature>
<feature type="modified residue" description="Phosphoserine; by PKD" evidence="4 12">
    <location>
        <position position="918"/>
    </location>
</feature>
<feature type="modified residue" description="Phosphoserine" evidence="1">
    <location>
        <position position="1163"/>
    </location>
</feature>
<feature type="modified residue" description="Phosphoserine" evidence="1">
    <location>
        <position position="1288"/>
    </location>
</feature>
<feature type="modified residue" description="Phosphoserine" evidence="1">
    <location>
        <position position="1344"/>
    </location>
</feature>
<feature type="modified residue" description="Phosphoserine" evidence="1">
    <location>
        <position position="1351"/>
    </location>
</feature>
<feature type="modified residue" description="Phosphoserine" evidence="1">
    <location>
        <position position="1353"/>
    </location>
</feature>
<feature type="modified residue" description="Phosphoserine" evidence="1">
    <location>
        <position position="1354"/>
    </location>
</feature>
<feature type="modified residue" description="Phosphoserine" evidence="1">
    <location>
        <position position="1357"/>
    </location>
</feature>
<feature type="modified residue" description="Phosphoserine" evidence="12">
    <location>
        <position position="1513"/>
    </location>
</feature>
<feature type="modified residue" description="Phosphoserine" evidence="12">
    <location>
        <position position="1518"/>
    </location>
</feature>
<feature type="modified residue" description="Phosphoserine" evidence="1">
    <location>
        <position position="1547"/>
    </location>
</feature>
<feature type="modified residue" description="Phosphoserine" evidence="1">
    <location>
        <position position="1566"/>
    </location>
</feature>
<feature type="modified residue" description="Phosphoserine" evidence="1">
    <location>
        <position position="1615"/>
    </location>
</feature>
<feature type="modified residue" description="Phosphoserine" evidence="1">
    <location>
        <position position="1625"/>
    </location>
</feature>
<feature type="modified residue" description="Phosphothreonine" evidence="1">
    <location>
        <position position="1671"/>
    </location>
</feature>
<feature type="modified residue" description="Phosphoserine" evidence="1">
    <location>
        <position position="1673"/>
    </location>
</feature>
<feature type="modified residue" description="Phosphothreonine" evidence="1">
    <location>
        <position position="1676"/>
    </location>
</feature>
<feature type="splice variant" id="VSP_031868" description="In isoform 2." evidence="10">
    <original>L</original>
    <variation>LQ</variation>
    <location>
        <position position="135"/>
    </location>
</feature>
<feature type="splice variant" id="VSP_031869" description="In isoform 2." evidence="10">
    <location>
        <begin position="1139"/>
        <end position="1187"/>
    </location>
</feature>
<feature type="mutagenesis site" description="Loss of phosphorylation." evidence="4">
    <original>S</original>
    <variation>A</variation>
    <location>
        <position position="918"/>
    </location>
</feature>
<feature type="mutagenesis site" description="Loss of binding to PDZ domain of SNTA1 and SNTB2." evidence="8">
    <original>S</original>
    <variation>D</variation>
    <location>
        <position position="1760"/>
    </location>
</feature>
<feature type="sequence conflict" description="In Ref. 2; AAG34167." evidence="11" ref="2">
    <original>T</original>
    <variation>P</variation>
    <location>
        <position position="519"/>
    </location>
</feature>
<feature type="sequence conflict" description="In Ref. 2; AAG34167." evidence="11" ref="2">
    <original>I</original>
    <variation>M</variation>
    <location>
        <position position="1001"/>
    </location>
</feature>
<feature type="sequence conflict" description="In Ref. 2; AAG34167." evidence="11" ref="2">
    <original>S</original>
    <variation>N</variation>
    <location>
        <position position="1220"/>
    </location>
</feature>
<feature type="strand" evidence="13">
    <location>
        <begin position="1758"/>
        <end position="1761"/>
    </location>
</feature>
<dbReference type="EMBL" id="AF239045">
    <property type="protein sequence ID" value="AAG35185.2"/>
    <property type="molecule type" value="mRNA"/>
</dbReference>
<dbReference type="EMBL" id="AF313464">
    <property type="protein sequence ID" value="AAG34167.1"/>
    <property type="status" value="ALT_FRAME"/>
    <property type="molecule type" value="mRNA"/>
</dbReference>
<dbReference type="RefSeq" id="NP_446247.1">
    <property type="nucleotide sequence ID" value="NM_053795.1"/>
</dbReference>
<dbReference type="PDB" id="7D6F">
    <property type="method" value="X-ray"/>
    <property type="resolution" value="2.70 A"/>
    <property type="chains" value="B=1748-1762"/>
</dbReference>
<dbReference type="PDBsum" id="7D6F"/>
<dbReference type="SMR" id="Q9EQG6"/>
<dbReference type="CORUM" id="Q9EQG6"/>
<dbReference type="FunCoup" id="Q9EQG6">
    <property type="interactions" value="3314"/>
</dbReference>
<dbReference type="IntAct" id="Q9EQG6">
    <property type="interactions" value="5"/>
</dbReference>
<dbReference type="STRING" id="10116.ENSRNOP00000063889"/>
<dbReference type="iPTMnet" id="Q9EQG6"/>
<dbReference type="PhosphoSitePlus" id="Q9EQG6"/>
<dbReference type="SwissPalm" id="Q9EQG6"/>
<dbReference type="jPOST" id="Q9EQG6"/>
<dbReference type="PaxDb" id="10116-ENSRNOP00000063889"/>
<dbReference type="GeneID" id="116478"/>
<dbReference type="KEGG" id="rno:116478"/>
<dbReference type="AGR" id="RGD:619949"/>
<dbReference type="CTD" id="57498"/>
<dbReference type="RGD" id="619949">
    <property type="gene designation" value="Kidins220"/>
</dbReference>
<dbReference type="eggNOG" id="KOG0502">
    <property type="taxonomic scope" value="Eukaryota"/>
</dbReference>
<dbReference type="InParanoid" id="Q9EQG6"/>
<dbReference type="PhylomeDB" id="Q9EQG6"/>
<dbReference type="Reactome" id="R-RNO-170984">
    <property type="pathway name" value="ARMS-mediated activation"/>
</dbReference>
<dbReference type="Reactome" id="R-RNO-9696270">
    <property type="pathway name" value="RND2 GTPase cycle"/>
</dbReference>
<dbReference type="Reactome" id="R-RNO-9696273">
    <property type="pathway name" value="RND1 GTPase cycle"/>
</dbReference>
<dbReference type="PRO" id="PR:Q9EQG6"/>
<dbReference type="Proteomes" id="UP000002494">
    <property type="component" value="Unplaced"/>
</dbReference>
<dbReference type="GO" id="GO:0005829">
    <property type="term" value="C:cytosol"/>
    <property type="evidence" value="ECO:0000304"/>
    <property type="project" value="Reactome"/>
</dbReference>
<dbReference type="GO" id="GO:0098978">
    <property type="term" value="C:glutamatergic synapse"/>
    <property type="evidence" value="ECO:0000314"/>
    <property type="project" value="SynGO"/>
</dbReference>
<dbReference type="GO" id="GO:0005770">
    <property type="term" value="C:late endosome"/>
    <property type="evidence" value="ECO:0000314"/>
    <property type="project" value="UniProtKB"/>
</dbReference>
<dbReference type="GO" id="GO:0016020">
    <property type="term" value="C:membrane"/>
    <property type="evidence" value="ECO:0007669"/>
    <property type="project" value="UniProtKB-SubCell"/>
</dbReference>
<dbReference type="GO" id="GO:0098794">
    <property type="term" value="C:postsynapse"/>
    <property type="evidence" value="ECO:0000314"/>
    <property type="project" value="SynGO"/>
</dbReference>
<dbReference type="GO" id="GO:0032991">
    <property type="term" value="C:protein-containing complex"/>
    <property type="evidence" value="ECO:0000314"/>
    <property type="project" value="UniProtKB"/>
</dbReference>
<dbReference type="GO" id="GO:0030165">
    <property type="term" value="F:PDZ domain binding"/>
    <property type="evidence" value="ECO:0000314"/>
    <property type="project" value="UniProtKB"/>
</dbReference>
<dbReference type="GO" id="GO:0019901">
    <property type="term" value="F:protein kinase binding"/>
    <property type="evidence" value="ECO:0000314"/>
    <property type="project" value="RGD"/>
</dbReference>
<dbReference type="GO" id="GO:0019887">
    <property type="term" value="F:protein kinase regulator activity"/>
    <property type="evidence" value="ECO:0000314"/>
    <property type="project" value="RGD"/>
</dbReference>
<dbReference type="GO" id="GO:1990090">
    <property type="term" value="P:cellular response to nerve growth factor stimulus"/>
    <property type="evidence" value="ECO:0000314"/>
    <property type="project" value="UniProtKB"/>
</dbReference>
<dbReference type="GO" id="GO:0048813">
    <property type="term" value="P:dendrite morphogenesis"/>
    <property type="evidence" value="ECO:0000266"/>
    <property type="project" value="RGD"/>
</dbReference>
<dbReference type="GO" id="GO:0001701">
    <property type="term" value="P:in utero embryonic development"/>
    <property type="evidence" value="ECO:0000266"/>
    <property type="project" value="RGD"/>
</dbReference>
<dbReference type="GO" id="GO:0038180">
    <property type="term" value="P:nerve growth factor signaling pathway"/>
    <property type="evidence" value="ECO:0000314"/>
    <property type="project" value="UniProtKB"/>
</dbReference>
<dbReference type="GO" id="GO:0010976">
    <property type="term" value="P:positive regulation of neuron projection development"/>
    <property type="evidence" value="ECO:0000315"/>
    <property type="project" value="UniProtKB"/>
</dbReference>
<dbReference type="FunFam" id="1.25.40.20:FF:000030">
    <property type="entry name" value="Kinase D-interacting substrate of 220 kDa"/>
    <property type="match status" value="1"/>
</dbReference>
<dbReference type="FunFam" id="1.25.40.20:FF:000195">
    <property type="entry name" value="Kinase D-interacting substrate of 220 kDa"/>
    <property type="match status" value="1"/>
</dbReference>
<dbReference type="FunFam" id="1.10.150.50:FF:000044">
    <property type="entry name" value="kinase D-interacting substrate of 220 kDa isoform X1"/>
    <property type="match status" value="1"/>
</dbReference>
<dbReference type="Gene3D" id="1.25.40.20">
    <property type="entry name" value="Ankyrin repeat-containing domain"/>
    <property type="match status" value="2"/>
</dbReference>
<dbReference type="Gene3D" id="1.10.150.50">
    <property type="entry name" value="Transcription Factor, Ets-1"/>
    <property type="match status" value="1"/>
</dbReference>
<dbReference type="InterPro" id="IPR002110">
    <property type="entry name" value="Ankyrin_rpt"/>
</dbReference>
<dbReference type="InterPro" id="IPR036770">
    <property type="entry name" value="Ankyrin_rpt-contain_sf"/>
</dbReference>
<dbReference type="InterPro" id="IPR011646">
    <property type="entry name" value="KAP_P-loop"/>
</dbReference>
<dbReference type="InterPro" id="IPR052771">
    <property type="entry name" value="Neurotrophin_sig_adaptor"/>
</dbReference>
<dbReference type="InterPro" id="IPR013761">
    <property type="entry name" value="SAM/pointed_sf"/>
</dbReference>
<dbReference type="PANTHER" id="PTHR24116">
    <property type="entry name" value="KINASE D-INTERACTING SUBSTRATE OF 220 KDA"/>
    <property type="match status" value="1"/>
</dbReference>
<dbReference type="PANTHER" id="PTHR24116:SF0">
    <property type="entry name" value="KINASE D-INTERACTING SUBSTRATE OF 220 KDA"/>
    <property type="match status" value="1"/>
</dbReference>
<dbReference type="Pfam" id="PF00023">
    <property type="entry name" value="Ank"/>
    <property type="match status" value="2"/>
</dbReference>
<dbReference type="Pfam" id="PF12796">
    <property type="entry name" value="Ank_2"/>
    <property type="match status" value="3"/>
</dbReference>
<dbReference type="Pfam" id="PF13637">
    <property type="entry name" value="Ank_4"/>
    <property type="match status" value="1"/>
</dbReference>
<dbReference type="Pfam" id="PF07693">
    <property type="entry name" value="KAP_NTPase"/>
    <property type="match status" value="1"/>
</dbReference>
<dbReference type="Pfam" id="PF23307">
    <property type="entry name" value="SAM_KIDINS220"/>
    <property type="match status" value="1"/>
</dbReference>
<dbReference type="PRINTS" id="PR01415">
    <property type="entry name" value="ANKYRIN"/>
</dbReference>
<dbReference type="SMART" id="SM00248">
    <property type="entry name" value="ANK"/>
    <property type="match status" value="11"/>
</dbReference>
<dbReference type="SUPFAM" id="SSF48403">
    <property type="entry name" value="Ankyrin repeat"/>
    <property type="match status" value="1"/>
</dbReference>
<dbReference type="SUPFAM" id="SSF47769">
    <property type="entry name" value="SAM/Pointed domain"/>
    <property type="match status" value="1"/>
</dbReference>
<dbReference type="PROSITE" id="PS50297">
    <property type="entry name" value="ANK_REP_REGION"/>
    <property type="match status" value="1"/>
</dbReference>
<dbReference type="PROSITE" id="PS50088">
    <property type="entry name" value="ANK_REPEAT"/>
    <property type="match status" value="10"/>
</dbReference>
<evidence type="ECO:0000250" key="1">
    <source>
        <dbReference type="UniProtKB" id="Q9ULH0"/>
    </source>
</evidence>
<evidence type="ECO:0000255" key="2"/>
<evidence type="ECO:0000256" key="3">
    <source>
        <dbReference type="SAM" id="MobiDB-lite"/>
    </source>
</evidence>
<evidence type="ECO:0000269" key="4">
    <source>
    </source>
</evidence>
<evidence type="ECO:0000269" key="5">
    <source>
    </source>
</evidence>
<evidence type="ECO:0000269" key="6">
    <source>
    </source>
</evidence>
<evidence type="ECO:0000269" key="7">
    <source>
    </source>
</evidence>
<evidence type="ECO:0000269" key="8">
    <source>
    </source>
</evidence>
<evidence type="ECO:0000269" key="9">
    <source>
    </source>
</evidence>
<evidence type="ECO:0000303" key="10">
    <source>
    </source>
</evidence>
<evidence type="ECO:0000305" key="11"/>
<evidence type="ECO:0007744" key="12">
    <source>
    </source>
</evidence>
<evidence type="ECO:0007829" key="13">
    <source>
        <dbReference type="PDB" id="7D6F"/>
    </source>
</evidence>
<comment type="function">
    <text evidence="5 6 8 9">Promotes a prolonged MAP-kinase signaling by neurotrophins through activation of a Rap1-dependent mechanism. Provides a docking site for the CRKL-C3G complex, resulting in Rap1-dependent sustained ERK activation. May play an important role in regulating postsynaptic signal transduction through the syntrophin-mediated localization of receptor tyrosine kinases such as EPHA4. In cooperation with SNTA1 can enhance EPHA4-induced JAK/STAT activation. Plays a role in nerve growth factor (NGF)-induced recruitment of RAPGEF2 to late endosomes and neurite outgrowth. May play a role in neurotrophin- and ephrin-mediated neuronal outgrowth and in axon guidance during neural development and in neuronal regeneration.</text>
</comment>
<comment type="subunit">
    <text evidence="4 5 6 7 8 9">Found in a complex, at least composed of KIDINS220, MAGI2, NTRK1 and RAPGEF2; the complex is mainly formed at late endosomes in a nerve growth factor (NGF)-dependent manner (PubMed:17724123). Interacts with RAPGEF2; the interaction is strengthened after NGF stimulation (PubMed:17724123). Isoform 2 interacts (via C-terminal domain) with MAGI2 isoform 1 (via PDZ domain) (PubMed:17724123). Interacts with NTRK1, NTRK2, NTRK3, ERKL and NGFR (PubMed:11150334, PubMed:15167895, PubMed:15378608). Can form a ternary complex with NGFR and NTRK1 and this complex is affected by the expression levels of KIDINS220/ARMS (PubMed:15378608). An increase in KIDINS220/ARMS expression leads to a decreased association of NGFR and NTRK1 (PubMed:15378608). Interacts (via PDZ-binding motif) with SNTA1 and SNTB2 (via PDZ domains) (PubMed:15939763). Interacts with EPHA4 and PRKD1 (PubMed:10998417, PubMed:15939763).</text>
</comment>
<comment type="interaction">
    <interactant intactId="EBI-976654">
        <id>Q9EQG6</id>
    </interactant>
    <interactant intactId="EBI-910">
        <id>P46109</id>
        <label>CRKL</label>
    </interactant>
    <organismsDiffer>true</organismsDiffer>
    <experiments>2</experiments>
</comment>
<comment type="subcellular location">
    <subcellularLocation>
        <location evidence="11">Membrane</location>
        <topology evidence="11">Multi-pass membrane protein</topology>
    </subcellularLocation>
    <subcellularLocation>
        <location evidence="4 9">Late endosome</location>
    </subcellularLocation>
    <text>Localized at late endosome before or after nerve growth factor (NGF) stimulation.</text>
</comment>
<comment type="alternative products">
    <event type="alternative splicing"/>
    <isoform>
        <id>Q9EQG6-1</id>
        <name>1</name>
        <sequence type="displayed"/>
    </isoform>
    <isoform>
        <id>Q9EQG6-2</id>
        <name>2</name>
        <sequence type="described" ref="VSP_031868 VSP_031869"/>
    </isoform>
</comment>
<comment type="tissue specificity">
    <text evidence="4 5 8">Expressed in developing nervous system and in highly plastic areas of the adult brain. Also expressed in neuroendocrine cells, where it concentrates at the tip of neurites. Expressed in developing muscle and is concentrated at the neuromuscular junction (NMS). SNTA1 can regulate its localization in the NMS.</text>
</comment>
<comment type="developmental stage">
    <text evidence="5 8">Expressed in postmitotic neurons during the stage of development in which extensive axon pathfinding is occurring. At 14 dpc, expressed in both spinal cord and dorsal root ganglia. Present on the sarcolemma in postnstal day 1 (P1) gastrocnemius muscle. By P8, becomes more concentrated at the junctional sites and by P21, colocalizes with acetylcholine receptor clusters.</text>
</comment>
<comment type="domain">
    <text evidence="6">The transmembrane domain mediates interaction with NTRK1.</text>
</comment>
<comment type="PTM">
    <text evidence="4 5 6 8">Tyrosine phosphorylated by NTRK1, NTRK2, EPHB2 and EPHA4. Phosphorylation at Ser-918 is induced by phorbol ester treatment. Phosphorylation by NTRK2 is induced by brain-derived neurotrophic factor (BDNF) and neurotrophin-4/5. Phosphorylation by NTRK1 is induced by nerve growth factor (NGF).</text>
</comment>
<comment type="sequence caution" evidence="11">
    <conflict type="frameshift">
        <sequence resource="EMBL-CDS" id="AAG34167"/>
    </conflict>
</comment>
<reference key="1">
    <citation type="journal article" date="2000" name="J. Biol. Chem.">
        <title>Identification and cloning of Kidins220, a novel neuronal substrate of protein kinase D.</title>
        <authorList>
            <person name="Iglesias T."/>
            <person name="Cabrera-Poch N."/>
            <person name="Mitchell M.P."/>
            <person name="Naven T.J.P."/>
            <person name="Rozengurt E."/>
            <person name="Schiavo G."/>
        </authorList>
    </citation>
    <scope>NUCLEOTIDE SEQUENCE [MRNA] (ISOFORM 1)</scope>
    <scope>TISSUE SPECIFICITY</scope>
    <scope>PHOSPHORYLATION AT SER-918</scope>
    <scope>MUTAGENESIS OF SER-918</scope>
    <scope>SUBCELLULAR LOCATION</scope>
    <scope>INTERACTION WITH PRKD1</scope>
</reference>
<reference key="2">
    <citation type="journal article" date="2001" name="J. Neurosci.">
        <title>An evolutionarily conserved transmembrane protein that is a novel downstream target of neurotrophin and ephrin receptors.</title>
        <authorList>
            <person name="Kong H."/>
            <person name="Boulter J."/>
            <person name="Weber J.L."/>
            <person name="Lai C."/>
            <person name="Chao M.V."/>
        </authorList>
    </citation>
    <scope>NUCLEOTIDE SEQUENCE [MRNA] (ISOFORM 2)</scope>
    <scope>FUNCTION</scope>
    <scope>INTERACTION WITH NGFR AND NTRK1</scope>
    <scope>PHOSPHORYLATION</scope>
    <scope>TISSUE SPECIFICITY</scope>
    <scope>DEVELOPMENTAL STAGE</scope>
    <source>
        <strain>Sprague-Dawley</strain>
    </source>
</reference>
<reference key="3">
    <citation type="journal article" date="2004" name="EMBO J.">
        <title>A unique pathway for sustained neurotrophin signaling through an ankyrin-rich membrane-spanning protein.</title>
        <authorList>
            <person name="Arevalo J.C."/>
            <person name="Yano H."/>
            <person name="Teng K.K."/>
            <person name="Chao M.V."/>
        </authorList>
    </citation>
    <scope>FUNCTION</scope>
    <scope>PHOSPHORYLATION</scope>
    <scope>DOMAIN</scope>
    <scope>INTERACTION WITH NTRK1; NTRK2; NTRK3 AND CRKL</scope>
</reference>
<reference key="4">
    <citation type="journal article" date="2004" name="J. Neurosci. Res.">
        <title>Ternary complex with Trk, p75, and an ankyrin-rich membrane spanning protein.</title>
        <authorList>
            <person name="Chang M.-S."/>
            <person name="Arevalo J.C."/>
            <person name="Chao M.V."/>
        </authorList>
    </citation>
    <scope>INTERACTION WITH NTRK1 AND NGFR</scope>
</reference>
<reference key="5">
    <citation type="journal article" date="2005" name="J. Cell Biol.">
        <title>Alpha-syntrophin regulates ARMS localization at the neuromuscular junction and enhances EphA4 signaling in an ARMS-dependent manner.</title>
        <authorList>
            <person name="Luo S."/>
            <person name="Chen Y."/>
            <person name="Lai K.-O."/>
            <person name="Arevalo J.C."/>
            <person name="Froehner S.C."/>
            <person name="Adams M.E."/>
            <person name="Chao M.V."/>
            <person name="Ip N.Y."/>
        </authorList>
    </citation>
    <scope>FUNCTION</scope>
    <scope>INTERACTION WITH SNTA1; SNTB2 AND EPHA4</scope>
    <scope>TISSUE SPECIFICITY</scope>
    <scope>DEVELOPMENTAL STAGE</scope>
    <scope>PHOSPHORYLATION</scope>
    <scope>MOTIF</scope>
    <scope>MUTAGENESIS OF SER-1760</scope>
</reference>
<reference key="6">
    <citation type="journal article" date="2007" name="J. Cell Biol.">
        <title>Rap1-PDZ-GEF1 interacts with a neurotrophin receptor at late endosomes, leading to sustained activation of Rap1 and ERK and neurite outgrowth.</title>
        <authorList>
            <person name="Hisata S."/>
            <person name="Sakisaka T."/>
            <person name="Baba T."/>
            <person name="Yamada T."/>
            <person name="Aoki K."/>
            <person name="Matsuda M."/>
            <person name="Takai Y."/>
        </authorList>
    </citation>
    <scope>FUNCTION</scope>
    <scope>IDENTIFICATION IN A COMPLEX WITH MAGI2; RAPGEF2 AND NTRK1</scope>
    <scope>INTERACTION WITH RAPGEF2 AND MAGI2</scope>
    <scope>SUBCELLULAR LOCATION</scope>
</reference>
<reference key="7">
    <citation type="journal article" date="2012" name="Nat. Commun.">
        <title>Quantitative maps of protein phosphorylation sites across 14 different rat organs and tissues.</title>
        <authorList>
            <person name="Lundby A."/>
            <person name="Secher A."/>
            <person name="Lage K."/>
            <person name="Nordsborg N.B."/>
            <person name="Dmytriyev A."/>
            <person name="Lundby C."/>
            <person name="Olsen J.V."/>
        </authorList>
    </citation>
    <scope>PHOSPHORYLATION [LARGE SCALE ANALYSIS] AT SER-918; SER-1513 AND SER-1518</scope>
    <scope>IDENTIFICATION BY MASS SPECTROMETRY [LARGE SCALE ANALYSIS]</scope>
</reference>
<name>KDIS_RAT</name>
<organism>
    <name type="scientific">Rattus norvegicus</name>
    <name type="common">Rat</name>
    <dbReference type="NCBI Taxonomy" id="10116"/>
    <lineage>
        <taxon>Eukaryota</taxon>
        <taxon>Metazoa</taxon>
        <taxon>Chordata</taxon>
        <taxon>Craniata</taxon>
        <taxon>Vertebrata</taxon>
        <taxon>Euteleostomi</taxon>
        <taxon>Mammalia</taxon>
        <taxon>Eutheria</taxon>
        <taxon>Euarchontoglires</taxon>
        <taxon>Glires</taxon>
        <taxon>Rodentia</taxon>
        <taxon>Myomorpha</taxon>
        <taxon>Muroidea</taxon>
        <taxon>Muridae</taxon>
        <taxon>Murinae</taxon>
        <taxon>Rattus</taxon>
    </lineage>
</organism>
<accession>Q9EQG6</accession>
<accession>Q9ERD4</accession>
<sequence length="1762" mass="195716">MSVLISQSVINYVEEENIPALKALLEKCKDVDERNECGQTPLMLAAEQGNVEIVKELLKNGANCNLEDLDNWTALISASKEGHIHIVEELLKSGASLEHRDMGGWTALMWACYKGRTDVVELLLSHGANPSVTGLYSVYPIIWAAGRGHADIVHLLLQNGAKVNCSDKYGTTPLVWAARKGHLECVKHLLAMGADVDQEGANSMTALIVAVKGGYTQSVKEILKRNPNVNLTDKDGNTALMIASKEGHIEIVQDLLDAGTYVNIPDRSGDTVLIGAVRGGHVEIVRALLQKYADIDIRGQDNKTALYWAVEKGNATMVRDILQCNPDTEICTKDGETPLIKATKMRNIEVVELLLDKGAKVSAVDKKGDTPLHVAIRGRSRRLAELLLRNPKDGRLLYRPNKAGETPYNIDCSHQKSILTQIFGARHLSPTETDGDMLGYDLYSSALADILSEPTMQPPICVGLYAQWGSGKSFLLKKLEDEMKTFAGQQTEPLFQFSWLIVFLTLLLCGGLGLVFAFTVDTNLAIAISLSFLALIYIFFIVIYFGGRREGESWNWAWALSTRLARHIGYLELLFKLMFVNPPELPEQTTKALPVRFLFTDYNRLSSVGGETSLAEMIATLSDACEREFGFLATRLFRVFRTEESQGKKKWKKTCCLPSFVIFLFIVGCIIAGITLLAIFRVDPKHLTVNAILISIASVVGLAFVLNCRTWWQVLDSLLNSQRKRLHSAASKLHKLKSEGFMKVLKCEVELMARMAKTIDSFTQNQTRLVVIIDGLDACEQDKVLQMLDTVRVLFSKGPFIAIFASDPHIIIKAINQNLNSVLRDSNINGHDYMRNIVHLPVFLNSRGLSNARKFLVTSATNGDITCSDTTGTQEDTDRRVSQNSLGEMTKLGSKTALNRRDTYRRRQMQRTITRQMSFDLTKLLVTEDWFSDISPQTMRRLLNIVSVTGRLLRANQITFNWDRLASWINLTEQWPYRTSWLILYLEETEGLPDQMTLKTIYERISKNIPTTKDVEPLLEIDGDIRNFEVFLSSRTPVLVARDVKTFLPCTVNLDPKLREIIADVRAAREQINIGGLAYPPLPLHEGPPRPPSGYSQPASVCSSASFNGPFPGGVVSPQPHSSYYSGLSGPQHPFYNRPFFAPYLYTPRYYPGGSQHLISRSSVKTSLPRDQNNGLPCDSGFNKQRQAAVPATGSSLLLSSMTVDVVCEKLRQIEGLDQSMMPQYCTTIKKANINGRVLSQCNIDELKKEMAMNFGDWHLFRSMVLEMRSVESQVVPEDPRFLNENSSAPVPHGESARRSSHTELPLTELSSQTPYTLNFSFEELNTLGLDEGAPRHSNLSWQSQTRRTPSLSSLNSQDSSIEISKLTDKVQAEYRDAYREYIAQMSQLEGGTGSSTISGRSSPHSTYYIGQSSSGGSIHSTLEQERGKEGELKQEDGRKSFLMKRGDVIDYSSSGVSTNEASPLDPITEEDEKSDQSGSKLLPGKKSSERPSLFQTDLKLKGGGLRYQKLPSDEDESGTEESDNTPLLKDDKDKKAEGKAERVCKSPEHSAEPIRTFIKAKEYLSDALLDKKDSSDSGVRSNESSPNHSLHNEAADDSQLEKANLIELEDEGHSGKRGMPHSLSGLQDPIIARMSICSEDKKSPSECSLIASSPEESWPACQKAYNLNRTPSTVTLNNNTAPTNRANQNFDEIEGIRETSQVILRPGPSPNPTAVQNENLKSMAHKRSQRSSYTRLSKDASELHAASSESTGFGEERESIL</sequence>
<proteinExistence type="evidence at protein level"/>
<protein>
    <recommendedName>
        <fullName>Kinase D-interacting substrate of 220 kDa</fullName>
    </recommendedName>
    <alternativeName>
        <fullName>Ankyrin repeat-rich membrane-spanning protein</fullName>
    </alternativeName>
</protein>
<gene>
    <name type="primary">Kidins220</name>
    <name type="synonym">Arms</name>
</gene>